<name>DCTN6_NEMVE</name>
<reference key="1">
    <citation type="journal article" date="2007" name="Science">
        <title>Sea anemone genome reveals ancestral eumetazoan gene repertoire and genomic organization.</title>
        <authorList>
            <person name="Putnam N.H."/>
            <person name="Srivastava M."/>
            <person name="Hellsten U."/>
            <person name="Dirks B."/>
            <person name="Chapman J."/>
            <person name="Salamov A."/>
            <person name="Terry A."/>
            <person name="Shapiro H."/>
            <person name="Lindquist E."/>
            <person name="Kapitonov V.V."/>
            <person name="Jurka J."/>
            <person name="Genikhovich G."/>
            <person name="Grigoriev I.V."/>
            <person name="Lucas S.M."/>
            <person name="Steele R.E."/>
            <person name="Finnerty J.R."/>
            <person name="Technau U."/>
            <person name="Martindale M.Q."/>
            <person name="Rokhsar D.S."/>
        </authorList>
    </citation>
    <scope>NUCLEOTIDE SEQUENCE [LARGE SCALE GENOMIC DNA]</scope>
    <source>
        <strain>CH2 X CH6</strain>
    </source>
</reference>
<dbReference type="EMBL" id="DS469655">
    <property type="protein sequence ID" value="EDO37040.1"/>
    <property type="molecule type" value="Genomic_DNA"/>
</dbReference>
<dbReference type="RefSeq" id="XP_001629103.1">
    <property type="nucleotide sequence ID" value="XM_001629053.1"/>
</dbReference>
<dbReference type="SMR" id="A7SGU3"/>
<dbReference type="STRING" id="45351.A7SGU3"/>
<dbReference type="EnsemblMetazoa" id="EDO37040">
    <property type="protein sequence ID" value="EDO37040"/>
    <property type="gene ID" value="NEMVEDRAFT_v1g170501"/>
</dbReference>
<dbReference type="KEGG" id="nve:5508522"/>
<dbReference type="eggNOG" id="KOG4042">
    <property type="taxonomic scope" value="Eukaryota"/>
</dbReference>
<dbReference type="HOGENOM" id="CLU_085418_1_0_1"/>
<dbReference type="InParanoid" id="A7SGU3"/>
<dbReference type="OMA" id="ITMQAET"/>
<dbReference type="PhylomeDB" id="A7SGU3"/>
<dbReference type="Proteomes" id="UP000001593">
    <property type="component" value="Unassembled WGS sequence"/>
</dbReference>
<dbReference type="GO" id="GO:0005737">
    <property type="term" value="C:cytoplasm"/>
    <property type="evidence" value="ECO:0007669"/>
    <property type="project" value="UniProtKB-KW"/>
</dbReference>
<dbReference type="GO" id="GO:0005869">
    <property type="term" value="C:dynactin complex"/>
    <property type="evidence" value="ECO:0000318"/>
    <property type="project" value="GO_Central"/>
</dbReference>
<dbReference type="GO" id="GO:0070840">
    <property type="term" value="F:dynein complex binding"/>
    <property type="evidence" value="ECO:0000318"/>
    <property type="project" value="GO_Central"/>
</dbReference>
<dbReference type="GO" id="GO:0007052">
    <property type="term" value="P:mitotic spindle organization"/>
    <property type="evidence" value="ECO:0000318"/>
    <property type="project" value="GO_Central"/>
</dbReference>
<dbReference type="CDD" id="cd04646">
    <property type="entry name" value="LbH_Dynactin_6"/>
    <property type="match status" value="1"/>
</dbReference>
<dbReference type="Gene3D" id="2.160.10.10">
    <property type="entry name" value="Hexapeptide repeat proteins"/>
    <property type="match status" value="1"/>
</dbReference>
<dbReference type="InterPro" id="IPR027777">
    <property type="entry name" value="DCTN6"/>
</dbReference>
<dbReference type="InterPro" id="IPR011004">
    <property type="entry name" value="Trimer_LpxA-like_sf"/>
</dbReference>
<dbReference type="PANTHER" id="PTHR13072">
    <property type="entry name" value="DYNACTIN 6"/>
    <property type="match status" value="1"/>
</dbReference>
<dbReference type="PANTHER" id="PTHR13072:SF0">
    <property type="entry name" value="DYNACTIN SUBUNIT 6"/>
    <property type="match status" value="1"/>
</dbReference>
<dbReference type="SUPFAM" id="SSF51161">
    <property type="entry name" value="Trimeric LpxA-like enzymes"/>
    <property type="match status" value="1"/>
</dbReference>
<proteinExistence type="inferred from homology"/>
<gene>
    <name type="primary">dctn6</name>
    <name type="ORF">v1g170501</name>
</gene>
<accession>A7SGU3</accession>
<sequence length="184" mass="20153">MAAARQTPRKLKIGAGSVVCQEAEIKGEVIIGSKTVVHPKARIIAEAGPIIIGDNNLIEEQVTIINPLQVEENEEVPPERIVMHIGCNNVFEVGSLCEAVKIGDNNILEAKSRVGRQTVLSHGCVIGARCEVTSQETIPENTVIYGQSCNRRVQAERPVPQSLQLDFLTKILPNYHHMKKSSRS</sequence>
<protein>
    <recommendedName>
        <fullName>Dynactin subunit 6</fullName>
    </recommendedName>
</protein>
<feature type="chain" id="PRO_0000327738" description="Dynactin subunit 6">
    <location>
        <begin position="1"/>
        <end position="184"/>
    </location>
</feature>
<evidence type="ECO:0000250" key="1"/>
<evidence type="ECO:0000250" key="2">
    <source>
        <dbReference type="UniProtKB" id="O00399"/>
    </source>
</evidence>
<evidence type="ECO:0000305" key="3"/>
<organism>
    <name type="scientific">Nematostella vectensis</name>
    <name type="common">Starlet sea anemone</name>
    <dbReference type="NCBI Taxonomy" id="45351"/>
    <lineage>
        <taxon>Eukaryota</taxon>
        <taxon>Metazoa</taxon>
        <taxon>Cnidaria</taxon>
        <taxon>Anthozoa</taxon>
        <taxon>Hexacorallia</taxon>
        <taxon>Actiniaria</taxon>
        <taxon>Edwardsiidae</taxon>
        <taxon>Nematostella</taxon>
    </lineage>
</organism>
<comment type="function">
    <text evidence="2">Part of the dynactin complex that activates the molecular motor dynein for ultra-processive transport along microtubules.</text>
</comment>
<comment type="subunit">
    <text evidence="2">Subunit of dynactin, a multiprotein complex part of a tripartite complex with dynein and a adapter, such as BICDL1, BICD2 or HOOK3. The dynactin complex is built around ACTR1A/ACTB filament and consists of an actin-related filament composed of a shoulder domain, a pointed end and a barbed end.</text>
</comment>
<comment type="subcellular location">
    <subcellularLocation>
        <location evidence="1">Cytoplasm</location>
        <location evidence="1">Cytoskeleton</location>
    </subcellularLocation>
</comment>
<comment type="similarity">
    <text evidence="3">Belongs to the dynactin subunits 5/6 family. Dynactin subunit 6 subfamily.</text>
</comment>
<keyword id="KW-0963">Cytoplasm</keyword>
<keyword id="KW-0206">Cytoskeleton</keyword>
<keyword id="KW-1185">Reference proteome</keyword>